<feature type="chain" id="PRO_1000198428" description="UPF0325 protein YaeH">
    <location>
        <begin position="1"/>
        <end position="128"/>
    </location>
</feature>
<name>YAEH_ECOLU</name>
<protein>
    <recommendedName>
        <fullName evidence="1">UPF0325 protein YaeH</fullName>
    </recommendedName>
</protein>
<reference key="1">
    <citation type="journal article" date="2009" name="PLoS Genet.">
        <title>Organised genome dynamics in the Escherichia coli species results in highly diverse adaptive paths.</title>
        <authorList>
            <person name="Touchon M."/>
            <person name="Hoede C."/>
            <person name="Tenaillon O."/>
            <person name="Barbe V."/>
            <person name="Baeriswyl S."/>
            <person name="Bidet P."/>
            <person name="Bingen E."/>
            <person name="Bonacorsi S."/>
            <person name="Bouchier C."/>
            <person name="Bouvet O."/>
            <person name="Calteau A."/>
            <person name="Chiapello H."/>
            <person name="Clermont O."/>
            <person name="Cruveiller S."/>
            <person name="Danchin A."/>
            <person name="Diard M."/>
            <person name="Dossat C."/>
            <person name="Karoui M.E."/>
            <person name="Frapy E."/>
            <person name="Garry L."/>
            <person name="Ghigo J.M."/>
            <person name="Gilles A.M."/>
            <person name="Johnson J."/>
            <person name="Le Bouguenec C."/>
            <person name="Lescat M."/>
            <person name="Mangenot S."/>
            <person name="Martinez-Jehanne V."/>
            <person name="Matic I."/>
            <person name="Nassif X."/>
            <person name="Oztas S."/>
            <person name="Petit M.A."/>
            <person name="Pichon C."/>
            <person name="Rouy Z."/>
            <person name="Ruf C.S."/>
            <person name="Schneider D."/>
            <person name="Tourret J."/>
            <person name="Vacherie B."/>
            <person name="Vallenet D."/>
            <person name="Medigue C."/>
            <person name="Rocha E.P.C."/>
            <person name="Denamur E."/>
        </authorList>
    </citation>
    <scope>NUCLEOTIDE SEQUENCE [LARGE SCALE GENOMIC DNA]</scope>
    <source>
        <strain>UMN026 / ExPEC</strain>
    </source>
</reference>
<comment type="similarity">
    <text evidence="1">Belongs to the UPF0325 family.</text>
</comment>
<organism>
    <name type="scientific">Escherichia coli O17:K52:H18 (strain UMN026 / ExPEC)</name>
    <dbReference type="NCBI Taxonomy" id="585056"/>
    <lineage>
        <taxon>Bacteria</taxon>
        <taxon>Pseudomonadati</taxon>
        <taxon>Pseudomonadota</taxon>
        <taxon>Gammaproteobacteria</taxon>
        <taxon>Enterobacterales</taxon>
        <taxon>Enterobacteriaceae</taxon>
        <taxon>Escherichia</taxon>
    </lineage>
</organism>
<proteinExistence type="inferred from homology"/>
<evidence type="ECO:0000255" key="1">
    <source>
        <dbReference type="HAMAP-Rule" id="MF_01519"/>
    </source>
</evidence>
<accession>B7N832</accession>
<sequence length="128" mass="15096">MYDNLKSLGITNPEEIDRYSLRQEANNDILKIYFQKDKGEFFAKSVKFKYPRQRKTVVADGVGQGYKEVQEISPNLRYIIDELDQICQRDRSEVDLKRKILDDLRHLESVVTNKISEIEADLEKLTRK</sequence>
<dbReference type="EMBL" id="CU928163">
    <property type="protein sequence ID" value="CAR11382.1"/>
    <property type="molecule type" value="Genomic_DNA"/>
</dbReference>
<dbReference type="RefSeq" id="WP_000272188.1">
    <property type="nucleotide sequence ID" value="NC_011751.1"/>
</dbReference>
<dbReference type="RefSeq" id="YP_002410938.1">
    <property type="nucleotide sequence ID" value="NC_011751.1"/>
</dbReference>
<dbReference type="SMR" id="B7N832"/>
<dbReference type="STRING" id="585056.ECUMN_0161"/>
<dbReference type="KEGG" id="eum:ECUMN_0161"/>
<dbReference type="PATRIC" id="fig|585056.7.peg.354"/>
<dbReference type="HOGENOM" id="CLU_136774_0_0_6"/>
<dbReference type="Proteomes" id="UP000007097">
    <property type="component" value="Chromosome"/>
</dbReference>
<dbReference type="HAMAP" id="MF_01519">
    <property type="entry name" value="UPF0325"/>
    <property type="match status" value="1"/>
</dbReference>
<dbReference type="InterPro" id="IPR020911">
    <property type="entry name" value="UPF0325"/>
</dbReference>
<dbReference type="NCBIfam" id="NF010213">
    <property type="entry name" value="PRK13677.1"/>
    <property type="match status" value="1"/>
</dbReference>
<dbReference type="Pfam" id="PF11944">
    <property type="entry name" value="DUF3461"/>
    <property type="match status" value="1"/>
</dbReference>
<gene>
    <name evidence="1" type="primary">yaeH</name>
    <name type="ordered locus">ECUMN_0161</name>
</gene>